<accession>Q9TA00</accession>
<reference key="1">
    <citation type="journal article" date="2000" name="Mol. Biol. Evol.">
        <title>The complete nucleotide sequence of the mitochondrial DNA of the agnathan Lampetra fluviatilis: bearings on the phylogeny of cyclostomes.</title>
        <authorList>
            <person name="Delarbre C."/>
            <person name="Escriva H."/>
            <person name="Gallut C."/>
            <person name="Barriel V."/>
            <person name="Kourilsky P."/>
            <person name="Janvier P."/>
            <person name="Laudet V."/>
            <person name="Gachelin G."/>
        </authorList>
    </citation>
    <scope>NUCLEOTIDE SEQUENCE [GENOMIC DNA]</scope>
</reference>
<proteinExistence type="inferred from homology"/>
<geneLocation type="mitochondrion"/>
<name>CYB_LAMFL</name>
<comment type="function">
    <text evidence="2">Component of the ubiquinol-cytochrome c reductase complex (complex III or cytochrome b-c1 complex) that is part of the mitochondrial respiratory chain. The b-c1 complex mediates electron transfer from ubiquinol to cytochrome c. Contributes to the generation of a proton gradient across the mitochondrial membrane that is then used for ATP synthesis.</text>
</comment>
<comment type="cofactor">
    <cofactor evidence="2">
        <name>heme b</name>
        <dbReference type="ChEBI" id="CHEBI:60344"/>
    </cofactor>
    <text evidence="2">Binds 2 heme b groups non-covalently.</text>
</comment>
<comment type="subunit">
    <text evidence="2">The cytochrome bc1 complex contains 3 respiratory subunits (MT-CYB, CYC1 and UQCRFS1), 2 core proteins (UQCRC1 and UQCRC2) and probably 6 low-molecular weight proteins.</text>
</comment>
<comment type="subcellular location">
    <subcellularLocation>
        <location evidence="2">Mitochondrion inner membrane</location>
        <topology evidence="2">Multi-pass membrane protein</topology>
    </subcellularLocation>
</comment>
<comment type="miscellaneous">
    <text evidence="1">Heme 1 (or BL or b562) is low-potential and absorbs at about 562 nm, and heme 2 (or BH or b566) is high-potential and absorbs at about 566 nm.</text>
</comment>
<comment type="similarity">
    <text evidence="3 4">Belongs to the cytochrome b family.</text>
</comment>
<comment type="caution">
    <text evidence="2">The full-length protein contains only eight transmembrane helices, not nine as predicted by bioinformatics tools.</text>
</comment>
<protein>
    <recommendedName>
        <fullName>Cytochrome b</fullName>
    </recommendedName>
    <alternativeName>
        <fullName>Complex III subunit 3</fullName>
    </alternativeName>
    <alternativeName>
        <fullName>Complex III subunit III</fullName>
    </alternativeName>
    <alternativeName>
        <fullName>Cytochrome b-c1 complex subunit 3</fullName>
    </alternativeName>
    <alternativeName>
        <fullName>Ubiquinol-cytochrome-c reductase complex cytochrome b subunit</fullName>
    </alternativeName>
</protein>
<organism>
    <name type="scientific">Lampetra fluviatilis</name>
    <name type="common">European river lamprey</name>
    <name type="synonym">Petromyzon fluviatilis</name>
    <dbReference type="NCBI Taxonomy" id="7748"/>
    <lineage>
        <taxon>Eukaryota</taxon>
        <taxon>Metazoa</taxon>
        <taxon>Chordata</taxon>
        <taxon>Craniata</taxon>
        <taxon>Vertebrata</taxon>
        <taxon>Cyclostomata</taxon>
        <taxon>Hyperoartia</taxon>
        <taxon>Petromyzontiformes</taxon>
        <taxon>Petromyzontidae</taxon>
        <taxon>Lampetra</taxon>
    </lineage>
</organism>
<sequence length="396" mass="44542">MSHPPTILRKTHPLLSLGNSMLVDLPSPANISAWWNFGSLLSLCLILQIITGLILAMHYTANTELAFSSVMHICRDVNNGWLMRNLHANGASMFFICIYAHIGRGIYYGSYLYKETWNVGVILFALTAATAFVGYVLPWGQMSFWGATVITNLISAVPYVGDDIVMWLWGGFSVSNATLTRFFTFHFILPFILAAMTMIHIMFLHQTGSSNPLGINSNLDKIQFHPYFSFKDIFGFVILLGVLFMISLLPPNALCEPDNFIYANPLSTPPHIKPEWYFLFAYAILRSIPNKLGGVMALAAAIMILLVIPFTHTSKQRGIQFRPLAQVTFWILIADLALLTWLGGEPAEHPFILMTQIASTVYFMIFILIFPILGRLENKLILLSKNTGKFNWNLTY</sequence>
<evidence type="ECO:0000250" key="1"/>
<evidence type="ECO:0000250" key="2">
    <source>
        <dbReference type="UniProtKB" id="P00157"/>
    </source>
</evidence>
<evidence type="ECO:0000255" key="3">
    <source>
        <dbReference type="PROSITE-ProRule" id="PRU00967"/>
    </source>
</evidence>
<evidence type="ECO:0000255" key="4">
    <source>
        <dbReference type="PROSITE-ProRule" id="PRU00968"/>
    </source>
</evidence>
<keyword id="KW-0249">Electron transport</keyword>
<keyword id="KW-0349">Heme</keyword>
<keyword id="KW-0408">Iron</keyword>
<keyword id="KW-0472">Membrane</keyword>
<keyword id="KW-0479">Metal-binding</keyword>
<keyword id="KW-0496">Mitochondrion</keyword>
<keyword id="KW-0999">Mitochondrion inner membrane</keyword>
<keyword id="KW-0679">Respiratory chain</keyword>
<keyword id="KW-0812">Transmembrane</keyword>
<keyword id="KW-1133">Transmembrane helix</keyword>
<keyword id="KW-0813">Transport</keyword>
<keyword id="KW-0830">Ubiquinone</keyword>
<feature type="chain" id="PRO_0000061084" description="Cytochrome b">
    <location>
        <begin position="1"/>
        <end position="396"/>
    </location>
</feature>
<feature type="transmembrane region" description="Helical" evidence="2">
    <location>
        <begin position="37"/>
        <end position="57"/>
    </location>
</feature>
<feature type="transmembrane region" description="Helical" evidence="2">
    <location>
        <begin position="81"/>
        <end position="102"/>
    </location>
</feature>
<feature type="transmembrane region" description="Helical" evidence="2">
    <location>
        <begin position="117"/>
        <end position="137"/>
    </location>
</feature>
<feature type="transmembrane region" description="Helical" evidence="2">
    <location>
        <begin position="182"/>
        <end position="202"/>
    </location>
</feature>
<feature type="transmembrane region" description="Helical" evidence="2">
    <location>
        <begin position="230"/>
        <end position="250"/>
    </location>
</feature>
<feature type="transmembrane region" description="Helical" evidence="2">
    <location>
        <begin position="292"/>
        <end position="312"/>
    </location>
</feature>
<feature type="transmembrane region" description="Helical" evidence="2">
    <location>
        <begin position="324"/>
        <end position="344"/>
    </location>
</feature>
<feature type="transmembrane region" description="Helical" evidence="2">
    <location>
        <begin position="351"/>
        <end position="371"/>
    </location>
</feature>
<feature type="binding site" description="axial binding residue" evidence="2">
    <location>
        <position position="87"/>
    </location>
    <ligand>
        <name>heme b</name>
        <dbReference type="ChEBI" id="CHEBI:60344"/>
        <label>b562</label>
    </ligand>
    <ligandPart>
        <name>Fe</name>
        <dbReference type="ChEBI" id="CHEBI:18248"/>
    </ligandPart>
</feature>
<feature type="binding site" description="axial binding residue" evidence="2">
    <location>
        <position position="101"/>
    </location>
    <ligand>
        <name>heme b</name>
        <dbReference type="ChEBI" id="CHEBI:60344"/>
        <label>b566</label>
    </ligand>
    <ligandPart>
        <name>Fe</name>
        <dbReference type="ChEBI" id="CHEBI:18248"/>
    </ligandPart>
</feature>
<feature type="binding site" description="axial binding residue" evidence="2">
    <location>
        <position position="186"/>
    </location>
    <ligand>
        <name>heme b</name>
        <dbReference type="ChEBI" id="CHEBI:60344"/>
        <label>b562</label>
    </ligand>
    <ligandPart>
        <name>Fe</name>
        <dbReference type="ChEBI" id="CHEBI:18248"/>
    </ligandPart>
</feature>
<feature type="binding site" description="axial binding residue" evidence="2">
    <location>
        <position position="200"/>
    </location>
    <ligand>
        <name>heme b</name>
        <dbReference type="ChEBI" id="CHEBI:60344"/>
        <label>b566</label>
    </ligand>
    <ligandPart>
        <name>Fe</name>
        <dbReference type="ChEBI" id="CHEBI:18248"/>
    </ligandPart>
</feature>
<feature type="binding site" evidence="2">
    <location>
        <position position="205"/>
    </location>
    <ligand>
        <name>a ubiquinone</name>
        <dbReference type="ChEBI" id="CHEBI:16389"/>
    </ligand>
</feature>
<gene>
    <name type="primary">mt-cyb</name>
    <name type="synonym">cob</name>
    <name type="synonym">cytb</name>
    <name type="synonym">mtcyb</name>
</gene>
<dbReference type="EMBL" id="Y18683">
    <property type="protein sequence ID" value="CAB62226.1"/>
    <property type="molecule type" value="Genomic_DNA"/>
</dbReference>
<dbReference type="RefSeq" id="NP_033650.1">
    <property type="nucleotide sequence ID" value="NC_001131.1"/>
</dbReference>
<dbReference type="SMR" id="Q9TA00"/>
<dbReference type="GeneID" id="808823"/>
<dbReference type="CTD" id="4519"/>
<dbReference type="GO" id="GO:0005743">
    <property type="term" value="C:mitochondrial inner membrane"/>
    <property type="evidence" value="ECO:0007669"/>
    <property type="project" value="UniProtKB-SubCell"/>
</dbReference>
<dbReference type="GO" id="GO:0045275">
    <property type="term" value="C:respiratory chain complex III"/>
    <property type="evidence" value="ECO:0007669"/>
    <property type="project" value="InterPro"/>
</dbReference>
<dbReference type="GO" id="GO:0046872">
    <property type="term" value="F:metal ion binding"/>
    <property type="evidence" value="ECO:0007669"/>
    <property type="project" value="UniProtKB-KW"/>
</dbReference>
<dbReference type="GO" id="GO:0008121">
    <property type="term" value="F:ubiquinol-cytochrome-c reductase activity"/>
    <property type="evidence" value="ECO:0007669"/>
    <property type="project" value="InterPro"/>
</dbReference>
<dbReference type="GO" id="GO:0006122">
    <property type="term" value="P:mitochondrial electron transport, ubiquinol to cytochrome c"/>
    <property type="evidence" value="ECO:0007669"/>
    <property type="project" value="TreeGrafter"/>
</dbReference>
<dbReference type="CDD" id="cd00290">
    <property type="entry name" value="cytochrome_b_C"/>
    <property type="match status" value="1"/>
</dbReference>
<dbReference type="CDD" id="cd00284">
    <property type="entry name" value="Cytochrome_b_N"/>
    <property type="match status" value="1"/>
</dbReference>
<dbReference type="FunFam" id="1.20.810.10:FF:000002">
    <property type="entry name" value="Cytochrome b"/>
    <property type="match status" value="1"/>
</dbReference>
<dbReference type="Gene3D" id="1.20.810.10">
    <property type="entry name" value="Cytochrome Bc1 Complex, Chain C"/>
    <property type="match status" value="1"/>
</dbReference>
<dbReference type="InterPro" id="IPR005798">
    <property type="entry name" value="Cyt_b/b6_C"/>
</dbReference>
<dbReference type="InterPro" id="IPR036150">
    <property type="entry name" value="Cyt_b/b6_C_sf"/>
</dbReference>
<dbReference type="InterPro" id="IPR005797">
    <property type="entry name" value="Cyt_b/b6_N"/>
</dbReference>
<dbReference type="InterPro" id="IPR027387">
    <property type="entry name" value="Cytb/b6-like_sf"/>
</dbReference>
<dbReference type="InterPro" id="IPR030689">
    <property type="entry name" value="Cytochrome_b"/>
</dbReference>
<dbReference type="InterPro" id="IPR048260">
    <property type="entry name" value="Cytochrome_b_C_euk/bac"/>
</dbReference>
<dbReference type="InterPro" id="IPR048259">
    <property type="entry name" value="Cytochrome_b_N_euk/bac"/>
</dbReference>
<dbReference type="InterPro" id="IPR016174">
    <property type="entry name" value="Di-haem_cyt_TM"/>
</dbReference>
<dbReference type="PANTHER" id="PTHR19271">
    <property type="entry name" value="CYTOCHROME B"/>
    <property type="match status" value="1"/>
</dbReference>
<dbReference type="PANTHER" id="PTHR19271:SF16">
    <property type="entry name" value="CYTOCHROME B"/>
    <property type="match status" value="1"/>
</dbReference>
<dbReference type="Pfam" id="PF00032">
    <property type="entry name" value="Cytochrom_B_C"/>
    <property type="match status" value="1"/>
</dbReference>
<dbReference type="Pfam" id="PF00033">
    <property type="entry name" value="Cytochrome_B"/>
    <property type="match status" value="1"/>
</dbReference>
<dbReference type="PIRSF" id="PIRSF038885">
    <property type="entry name" value="COB"/>
    <property type="match status" value="1"/>
</dbReference>
<dbReference type="SUPFAM" id="SSF81648">
    <property type="entry name" value="a domain/subunit of cytochrome bc1 complex (Ubiquinol-cytochrome c reductase)"/>
    <property type="match status" value="1"/>
</dbReference>
<dbReference type="SUPFAM" id="SSF81342">
    <property type="entry name" value="Transmembrane di-heme cytochromes"/>
    <property type="match status" value="1"/>
</dbReference>
<dbReference type="PROSITE" id="PS51003">
    <property type="entry name" value="CYTB_CTER"/>
    <property type="match status" value="1"/>
</dbReference>
<dbReference type="PROSITE" id="PS51002">
    <property type="entry name" value="CYTB_NTER"/>
    <property type="match status" value="1"/>
</dbReference>